<accession>Q8Y672</accession>
<protein>
    <recommendedName>
        <fullName evidence="1">Guanylate kinase</fullName>
        <ecNumber evidence="1">2.7.4.8</ecNumber>
    </recommendedName>
    <alternativeName>
        <fullName evidence="1">GMP kinase</fullName>
    </alternativeName>
</protein>
<feature type="chain" id="PRO_0000170558" description="Guanylate kinase">
    <location>
        <begin position="1"/>
        <end position="205"/>
    </location>
</feature>
<feature type="domain" description="Guanylate kinase-like" evidence="1">
    <location>
        <begin position="5"/>
        <end position="184"/>
    </location>
</feature>
<feature type="binding site" evidence="1">
    <location>
        <begin position="12"/>
        <end position="19"/>
    </location>
    <ligand>
        <name>ATP</name>
        <dbReference type="ChEBI" id="CHEBI:30616"/>
    </ligand>
</feature>
<feature type="strand" evidence="2">
    <location>
        <begin position="7"/>
        <end position="11"/>
    </location>
</feature>
<feature type="helix" evidence="2">
    <location>
        <begin position="18"/>
        <end position="27"/>
    </location>
</feature>
<feature type="strand" evidence="2">
    <location>
        <begin position="39"/>
        <end position="42"/>
    </location>
</feature>
<feature type="turn" evidence="2">
    <location>
        <begin position="50"/>
        <end position="52"/>
    </location>
</feature>
<feature type="helix" evidence="2">
    <location>
        <begin position="59"/>
        <end position="67"/>
    </location>
</feature>
<feature type="strand" evidence="2">
    <location>
        <begin position="71"/>
        <end position="77"/>
    </location>
</feature>
<feature type="strand" evidence="2">
    <location>
        <begin position="80"/>
        <end position="85"/>
    </location>
</feature>
<feature type="helix" evidence="2">
    <location>
        <begin position="86"/>
        <end position="94"/>
    </location>
</feature>
<feature type="strand" evidence="2">
    <location>
        <begin position="99"/>
        <end position="102"/>
    </location>
</feature>
<feature type="helix" evidence="2">
    <location>
        <begin position="105"/>
        <end position="114"/>
    </location>
</feature>
<feature type="strand" evidence="2">
    <location>
        <begin position="118"/>
        <end position="124"/>
    </location>
</feature>
<feature type="turn" evidence="2">
    <location>
        <begin position="126"/>
        <end position="130"/>
    </location>
</feature>
<feature type="helix" evidence="2">
    <location>
        <begin position="144"/>
        <end position="159"/>
    </location>
</feature>
<feature type="helix" evidence="2">
    <location>
        <begin position="160"/>
        <end position="162"/>
    </location>
</feature>
<feature type="strand" evidence="2">
    <location>
        <begin position="163"/>
        <end position="168"/>
    </location>
</feature>
<feature type="helix" evidence="2">
    <location>
        <begin position="172"/>
        <end position="187"/>
    </location>
</feature>
<feature type="helix" evidence="2">
    <location>
        <begin position="190"/>
        <end position="200"/>
    </location>
</feature>
<evidence type="ECO:0000255" key="1">
    <source>
        <dbReference type="HAMAP-Rule" id="MF_00328"/>
    </source>
</evidence>
<evidence type="ECO:0007829" key="2">
    <source>
        <dbReference type="PDB" id="3TAU"/>
    </source>
</evidence>
<organism>
    <name type="scientific">Listeria monocytogenes serovar 1/2a (strain ATCC BAA-679 / EGD-e)</name>
    <dbReference type="NCBI Taxonomy" id="169963"/>
    <lineage>
        <taxon>Bacteria</taxon>
        <taxon>Bacillati</taxon>
        <taxon>Bacillota</taxon>
        <taxon>Bacilli</taxon>
        <taxon>Bacillales</taxon>
        <taxon>Listeriaceae</taxon>
        <taxon>Listeria</taxon>
    </lineage>
</organism>
<comment type="function">
    <text evidence="1">Essential for recycling GMP and indirectly, cGMP.</text>
</comment>
<comment type="catalytic activity">
    <reaction evidence="1">
        <text>GMP + ATP = GDP + ADP</text>
        <dbReference type="Rhea" id="RHEA:20780"/>
        <dbReference type="ChEBI" id="CHEBI:30616"/>
        <dbReference type="ChEBI" id="CHEBI:58115"/>
        <dbReference type="ChEBI" id="CHEBI:58189"/>
        <dbReference type="ChEBI" id="CHEBI:456216"/>
        <dbReference type="EC" id="2.7.4.8"/>
    </reaction>
</comment>
<comment type="subcellular location">
    <subcellularLocation>
        <location evidence="1">Cytoplasm</location>
    </subcellularLocation>
</comment>
<comment type="similarity">
    <text evidence="1">Belongs to the guanylate kinase family.</text>
</comment>
<sequence length="205" mass="23282">MTERGLLIVLSGPSGVGKGTVREAVFKDPETSFDYSISMTTRLPREGEQDGVDYYFRSREVFEQAIKDGKMLEYAEYVGNYYGTPLEYVEEKLAAGVDIFLEIEVQGAMQVRKAMPEGIFIFLTPPDLSELKNRIIGRGTESMEVVEERMETAKKEIEMMASYDYAVVNDVVANAVQKIKGIVETEHLKTERVIHRYKKMLEGLQ</sequence>
<gene>
    <name evidence="1" type="primary">gmk</name>
    <name type="ordered locus">lmo1827</name>
</gene>
<proteinExistence type="evidence at protein level"/>
<name>KGUA_LISMO</name>
<keyword id="KW-0002">3D-structure</keyword>
<keyword id="KW-0067">ATP-binding</keyword>
<keyword id="KW-0963">Cytoplasm</keyword>
<keyword id="KW-0418">Kinase</keyword>
<keyword id="KW-0547">Nucleotide-binding</keyword>
<keyword id="KW-1185">Reference proteome</keyword>
<keyword id="KW-0808">Transferase</keyword>
<dbReference type="EC" id="2.7.4.8" evidence="1"/>
<dbReference type="EMBL" id="AL591981">
    <property type="protein sequence ID" value="CAC99905.1"/>
    <property type="molecule type" value="Genomic_DNA"/>
</dbReference>
<dbReference type="PIR" id="AC1303">
    <property type="entry name" value="AC1303"/>
</dbReference>
<dbReference type="RefSeq" id="NP_465352.1">
    <property type="nucleotide sequence ID" value="NC_003210.1"/>
</dbReference>
<dbReference type="RefSeq" id="WP_003725659.1">
    <property type="nucleotide sequence ID" value="NZ_CP149495.1"/>
</dbReference>
<dbReference type="PDB" id="3TAU">
    <property type="method" value="X-ray"/>
    <property type="resolution" value="2.05 A"/>
    <property type="chains" value="A/B=1-205"/>
</dbReference>
<dbReference type="PDBsum" id="3TAU"/>
<dbReference type="SMR" id="Q8Y672"/>
<dbReference type="STRING" id="169963.gene:17594512"/>
<dbReference type="PaxDb" id="169963-lmo1827"/>
<dbReference type="EnsemblBacteria" id="CAC99905">
    <property type="protein sequence ID" value="CAC99905"/>
    <property type="gene ID" value="CAC99905"/>
</dbReference>
<dbReference type="GeneID" id="985464"/>
<dbReference type="KEGG" id="lmo:lmo1827"/>
<dbReference type="PATRIC" id="fig|169963.11.peg.1872"/>
<dbReference type="eggNOG" id="COG0194">
    <property type="taxonomic scope" value="Bacteria"/>
</dbReference>
<dbReference type="HOGENOM" id="CLU_001715_1_2_9"/>
<dbReference type="OrthoDB" id="9808150at2"/>
<dbReference type="PhylomeDB" id="Q8Y672"/>
<dbReference type="BioCyc" id="LMON169963:LMO1827-MONOMER"/>
<dbReference type="EvolutionaryTrace" id="Q8Y672"/>
<dbReference type="Proteomes" id="UP000000817">
    <property type="component" value="Chromosome"/>
</dbReference>
<dbReference type="GO" id="GO:0005829">
    <property type="term" value="C:cytosol"/>
    <property type="evidence" value="ECO:0000318"/>
    <property type="project" value="GO_Central"/>
</dbReference>
<dbReference type="GO" id="GO:0005524">
    <property type="term" value="F:ATP binding"/>
    <property type="evidence" value="ECO:0007669"/>
    <property type="project" value="UniProtKB-UniRule"/>
</dbReference>
<dbReference type="GO" id="GO:0004385">
    <property type="term" value="F:guanylate kinase activity"/>
    <property type="evidence" value="ECO:0000318"/>
    <property type="project" value="GO_Central"/>
</dbReference>
<dbReference type="CDD" id="cd00071">
    <property type="entry name" value="GMPK"/>
    <property type="match status" value="1"/>
</dbReference>
<dbReference type="FunFam" id="3.40.50.300:FF:000855">
    <property type="entry name" value="Guanylate kinase"/>
    <property type="match status" value="1"/>
</dbReference>
<dbReference type="FunFam" id="3.30.63.10:FF:000002">
    <property type="entry name" value="Guanylate kinase 1"/>
    <property type="match status" value="1"/>
</dbReference>
<dbReference type="Gene3D" id="3.30.63.10">
    <property type="entry name" value="Guanylate Kinase phosphate binding domain"/>
    <property type="match status" value="1"/>
</dbReference>
<dbReference type="Gene3D" id="3.40.50.300">
    <property type="entry name" value="P-loop containing nucleotide triphosphate hydrolases"/>
    <property type="match status" value="1"/>
</dbReference>
<dbReference type="HAMAP" id="MF_00328">
    <property type="entry name" value="Guanylate_kinase"/>
    <property type="match status" value="1"/>
</dbReference>
<dbReference type="InterPro" id="IPR008145">
    <property type="entry name" value="GK/Ca_channel_bsu"/>
</dbReference>
<dbReference type="InterPro" id="IPR008144">
    <property type="entry name" value="Guanylate_kin-like_dom"/>
</dbReference>
<dbReference type="InterPro" id="IPR017665">
    <property type="entry name" value="Guanylate_kinase"/>
</dbReference>
<dbReference type="InterPro" id="IPR020590">
    <property type="entry name" value="Guanylate_kinase_CS"/>
</dbReference>
<dbReference type="InterPro" id="IPR027417">
    <property type="entry name" value="P-loop_NTPase"/>
</dbReference>
<dbReference type="NCBIfam" id="TIGR03263">
    <property type="entry name" value="guanyl_kin"/>
    <property type="match status" value="1"/>
</dbReference>
<dbReference type="PANTHER" id="PTHR23117:SF13">
    <property type="entry name" value="GUANYLATE KINASE"/>
    <property type="match status" value="1"/>
</dbReference>
<dbReference type="PANTHER" id="PTHR23117">
    <property type="entry name" value="GUANYLATE KINASE-RELATED"/>
    <property type="match status" value="1"/>
</dbReference>
<dbReference type="Pfam" id="PF00625">
    <property type="entry name" value="Guanylate_kin"/>
    <property type="match status" value="1"/>
</dbReference>
<dbReference type="SMART" id="SM00072">
    <property type="entry name" value="GuKc"/>
    <property type="match status" value="1"/>
</dbReference>
<dbReference type="SUPFAM" id="SSF52540">
    <property type="entry name" value="P-loop containing nucleoside triphosphate hydrolases"/>
    <property type="match status" value="1"/>
</dbReference>
<dbReference type="PROSITE" id="PS00856">
    <property type="entry name" value="GUANYLATE_KINASE_1"/>
    <property type="match status" value="1"/>
</dbReference>
<dbReference type="PROSITE" id="PS50052">
    <property type="entry name" value="GUANYLATE_KINASE_2"/>
    <property type="match status" value="1"/>
</dbReference>
<reference key="1">
    <citation type="journal article" date="2001" name="Science">
        <title>Comparative genomics of Listeria species.</title>
        <authorList>
            <person name="Glaser P."/>
            <person name="Frangeul L."/>
            <person name="Buchrieser C."/>
            <person name="Rusniok C."/>
            <person name="Amend A."/>
            <person name="Baquero F."/>
            <person name="Berche P."/>
            <person name="Bloecker H."/>
            <person name="Brandt P."/>
            <person name="Chakraborty T."/>
            <person name="Charbit A."/>
            <person name="Chetouani F."/>
            <person name="Couve E."/>
            <person name="de Daruvar A."/>
            <person name="Dehoux P."/>
            <person name="Domann E."/>
            <person name="Dominguez-Bernal G."/>
            <person name="Duchaud E."/>
            <person name="Durant L."/>
            <person name="Dussurget O."/>
            <person name="Entian K.-D."/>
            <person name="Fsihi H."/>
            <person name="Garcia-del Portillo F."/>
            <person name="Garrido P."/>
            <person name="Gautier L."/>
            <person name="Goebel W."/>
            <person name="Gomez-Lopez N."/>
            <person name="Hain T."/>
            <person name="Hauf J."/>
            <person name="Jackson D."/>
            <person name="Jones L.-M."/>
            <person name="Kaerst U."/>
            <person name="Kreft J."/>
            <person name="Kuhn M."/>
            <person name="Kunst F."/>
            <person name="Kurapkat G."/>
            <person name="Madueno E."/>
            <person name="Maitournam A."/>
            <person name="Mata Vicente J."/>
            <person name="Ng E."/>
            <person name="Nedjari H."/>
            <person name="Nordsiek G."/>
            <person name="Novella S."/>
            <person name="de Pablos B."/>
            <person name="Perez-Diaz J.-C."/>
            <person name="Purcell R."/>
            <person name="Remmel B."/>
            <person name="Rose M."/>
            <person name="Schlueter T."/>
            <person name="Simoes N."/>
            <person name="Tierrez A."/>
            <person name="Vazquez-Boland J.-A."/>
            <person name="Voss H."/>
            <person name="Wehland J."/>
            <person name="Cossart P."/>
        </authorList>
    </citation>
    <scope>NUCLEOTIDE SEQUENCE [LARGE SCALE GENOMIC DNA]</scope>
    <source>
        <strain>ATCC BAA-679 / EGD-e</strain>
    </source>
</reference>